<protein>
    <recommendedName>
        <fullName evidence="1">Small ribosomal subunit protein uS19</fullName>
    </recommendedName>
    <alternativeName>
        <fullName evidence="2">30S ribosomal protein S19</fullName>
    </alternativeName>
</protein>
<organism>
    <name type="scientific">Burkholderia mallei (strain SAVP1)</name>
    <dbReference type="NCBI Taxonomy" id="320388"/>
    <lineage>
        <taxon>Bacteria</taxon>
        <taxon>Pseudomonadati</taxon>
        <taxon>Pseudomonadota</taxon>
        <taxon>Betaproteobacteria</taxon>
        <taxon>Burkholderiales</taxon>
        <taxon>Burkholderiaceae</taxon>
        <taxon>Burkholderia</taxon>
        <taxon>pseudomallei group</taxon>
    </lineage>
</organism>
<dbReference type="EMBL" id="CP000526">
    <property type="protein sequence ID" value="ABM51365.1"/>
    <property type="molecule type" value="Genomic_DNA"/>
</dbReference>
<dbReference type="RefSeq" id="WP_004199273.1">
    <property type="nucleotide sequence ID" value="NC_008785.1"/>
</dbReference>
<dbReference type="SMR" id="A1V899"/>
<dbReference type="GeneID" id="98107156"/>
<dbReference type="KEGG" id="bmv:BMASAVP1_A3165"/>
<dbReference type="HOGENOM" id="CLU_144911_0_1_4"/>
<dbReference type="GO" id="GO:0005737">
    <property type="term" value="C:cytoplasm"/>
    <property type="evidence" value="ECO:0007669"/>
    <property type="project" value="UniProtKB-ARBA"/>
</dbReference>
<dbReference type="GO" id="GO:0015935">
    <property type="term" value="C:small ribosomal subunit"/>
    <property type="evidence" value="ECO:0007669"/>
    <property type="project" value="InterPro"/>
</dbReference>
<dbReference type="GO" id="GO:0019843">
    <property type="term" value="F:rRNA binding"/>
    <property type="evidence" value="ECO:0007669"/>
    <property type="project" value="UniProtKB-UniRule"/>
</dbReference>
<dbReference type="GO" id="GO:0003735">
    <property type="term" value="F:structural constituent of ribosome"/>
    <property type="evidence" value="ECO:0007669"/>
    <property type="project" value="InterPro"/>
</dbReference>
<dbReference type="GO" id="GO:0000028">
    <property type="term" value="P:ribosomal small subunit assembly"/>
    <property type="evidence" value="ECO:0007669"/>
    <property type="project" value="TreeGrafter"/>
</dbReference>
<dbReference type="GO" id="GO:0006412">
    <property type="term" value="P:translation"/>
    <property type="evidence" value="ECO:0007669"/>
    <property type="project" value="UniProtKB-UniRule"/>
</dbReference>
<dbReference type="FunFam" id="3.30.860.10:FF:000001">
    <property type="entry name" value="30S ribosomal protein S19"/>
    <property type="match status" value="1"/>
</dbReference>
<dbReference type="Gene3D" id="3.30.860.10">
    <property type="entry name" value="30s Ribosomal Protein S19, Chain A"/>
    <property type="match status" value="1"/>
</dbReference>
<dbReference type="HAMAP" id="MF_00531">
    <property type="entry name" value="Ribosomal_uS19"/>
    <property type="match status" value="1"/>
</dbReference>
<dbReference type="InterPro" id="IPR002222">
    <property type="entry name" value="Ribosomal_uS19"/>
</dbReference>
<dbReference type="InterPro" id="IPR005732">
    <property type="entry name" value="Ribosomal_uS19_bac-type"/>
</dbReference>
<dbReference type="InterPro" id="IPR020934">
    <property type="entry name" value="Ribosomal_uS19_CS"/>
</dbReference>
<dbReference type="InterPro" id="IPR023575">
    <property type="entry name" value="Ribosomal_uS19_SF"/>
</dbReference>
<dbReference type="NCBIfam" id="TIGR01050">
    <property type="entry name" value="rpsS_bact"/>
    <property type="match status" value="1"/>
</dbReference>
<dbReference type="PANTHER" id="PTHR11880">
    <property type="entry name" value="RIBOSOMAL PROTEIN S19P FAMILY MEMBER"/>
    <property type="match status" value="1"/>
</dbReference>
<dbReference type="PANTHER" id="PTHR11880:SF8">
    <property type="entry name" value="SMALL RIBOSOMAL SUBUNIT PROTEIN US19M"/>
    <property type="match status" value="1"/>
</dbReference>
<dbReference type="Pfam" id="PF00203">
    <property type="entry name" value="Ribosomal_S19"/>
    <property type="match status" value="1"/>
</dbReference>
<dbReference type="PIRSF" id="PIRSF002144">
    <property type="entry name" value="Ribosomal_S19"/>
    <property type="match status" value="1"/>
</dbReference>
<dbReference type="PRINTS" id="PR00975">
    <property type="entry name" value="RIBOSOMALS19"/>
</dbReference>
<dbReference type="SUPFAM" id="SSF54570">
    <property type="entry name" value="Ribosomal protein S19"/>
    <property type="match status" value="1"/>
</dbReference>
<dbReference type="PROSITE" id="PS00323">
    <property type="entry name" value="RIBOSOMAL_S19"/>
    <property type="match status" value="1"/>
</dbReference>
<accession>A1V899</accession>
<gene>
    <name evidence="1" type="primary">rpsS</name>
    <name type="ordered locus">BMASAVP1_A3165</name>
</gene>
<proteinExistence type="inferred from homology"/>
<feature type="chain" id="PRO_1000051024" description="Small ribosomal subunit protein uS19">
    <location>
        <begin position="1"/>
        <end position="91"/>
    </location>
</feature>
<comment type="function">
    <text evidence="1">Protein S19 forms a complex with S13 that binds strongly to the 16S ribosomal RNA.</text>
</comment>
<comment type="similarity">
    <text evidence="1">Belongs to the universal ribosomal protein uS19 family.</text>
</comment>
<evidence type="ECO:0000255" key="1">
    <source>
        <dbReference type="HAMAP-Rule" id="MF_00531"/>
    </source>
</evidence>
<evidence type="ECO:0000305" key="2"/>
<keyword id="KW-0687">Ribonucleoprotein</keyword>
<keyword id="KW-0689">Ribosomal protein</keyword>
<keyword id="KW-0694">RNA-binding</keyword>
<keyword id="KW-0699">rRNA-binding</keyword>
<sequence length="91" mass="10108">MARSVKKGPFCDAHLLKKVEAAAASRDKKPIKTWSRRSTILPDFIGLTIAVHNGRQHVPVYISENMVGHKLGEFALTRTFKGHAADKKAKK</sequence>
<name>RS19_BURMS</name>
<reference key="1">
    <citation type="journal article" date="2010" name="Genome Biol. Evol.">
        <title>Continuing evolution of Burkholderia mallei through genome reduction and large-scale rearrangements.</title>
        <authorList>
            <person name="Losada L."/>
            <person name="Ronning C.M."/>
            <person name="DeShazer D."/>
            <person name="Woods D."/>
            <person name="Fedorova N."/>
            <person name="Kim H.S."/>
            <person name="Shabalina S.A."/>
            <person name="Pearson T.R."/>
            <person name="Brinkac L."/>
            <person name="Tan P."/>
            <person name="Nandi T."/>
            <person name="Crabtree J."/>
            <person name="Badger J."/>
            <person name="Beckstrom-Sternberg S."/>
            <person name="Saqib M."/>
            <person name="Schutzer S.E."/>
            <person name="Keim P."/>
            <person name="Nierman W.C."/>
        </authorList>
    </citation>
    <scope>NUCLEOTIDE SEQUENCE [LARGE SCALE GENOMIC DNA]</scope>
    <source>
        <strain>SAVP1</strain>
    </source>
</reference>